<proteinExistence type="inferred from homology"/>
<dbReference type="EC" id="2.6.1.87" evidence="1"/>
<dbReference type="EMBL" id="CP000075">
    <property type="protein sequence ID" value="AAY37728.1"/>
    <property type="molecule type" value="Genomic_DNA"/>
</dbReference>
<dbReference type="RefSeq" id="WP_011267890.1">
    <property type="nucleotide sequence ID" value="NC_007005.1"/>
</dbReference>
<dbReference type="RefSeq" id="YP_235766.1">
    <property type="nucleotide sequence ID" value="NC_007005.1"/>
</dbReference>
<dbReference type="SMR" id="Q4ZSZ4"/>
<dbReference type="STRING" id="205918.Psyr_2689"/>
<dbReference type="KEGG" id="psb:Psyr_2689"/>
<dbReference type="PATRIC" id="fig|205918.7.peg.2749"/>
<dbReference type="eggNOG" id="COG0399">
    <property type="taxonomic scope" value="Bacteria"/>
</dbReference>
<dbReference type="HOGENOM" id="CLU_033332_0_3_6"/>
<dbReference type="OrthoDB" id="9804264at2"/>
<dbReference type="UniPathway" id="UPA00030"/>
<dbReference type="UniPathway" id="UPA00032">
    <property type="reaction ID" value="UER00493"/>
</dbReference>
<dbReference type="Proteomes" id="UP000000426">
    <property type="component" value="Chromosome"/>
</dbReference>
<dbReference type="GO" id="GO:0016020">
    <property type="term" value="C:membrane"/>
    <property type="evidence" value="ECO:0007669"/>
    <property type="project" value="GOC"/>
</dbReference>
<dbReference type="GO" id="GO:0030170">
    <property type="term" value="F:pyridoxal phosphate binding"/>
    <property type="evidence" value="ECO:0007669"/>
    <property type="project" value="TreeGrafter"/>
</dbReference>
<dbReference type="GO" id="GO:0099620">
    <property type="term" value="F:UDP-4-amino-4-deoxy-L-arabinose aminotransferase"/>
    <property type="evidence" value="ECO:0007669"/>
    <property type="project" value="UniProtKB-EC"/>
</dbReference>
<dbReference type="GO" id="GO:0009245">
    <property type="term" value="P:lipid A biosynthetic process"/>
    <property type="evidence" value="ECO:0007669"/>
    <property type="project" value="UniProtKB-KW"/>
</dbReference>
<dbReference type="GO" id="GO:0009103">
    <property type="term" value="P:lipopolysaccharide biosynthetic process"/>
    <property type="evidence" value="ECO:0007669"/>
    <property type="project" value="UniProtKB-UniRule"/>
</dbReference>
<dbReference type="GO" id="GO:0046677">
    <property type="term" value="P:response to antibiotic"/>
    <property type="evidence" value="ECO:0007669"/>
    <property type="project" value="UniProtKB-KW"/>
</dbReference>
<dbReference type="CDD" id="cd00616">
    <property type="entry name" value="AHBA_syn"/>
    <property type="match status" value="1"/>
</dbReference>
<dbReference type="FunFam" id="3.40.640.10:FF:000040">
    <property type="entry name" value="UDP-4-amino-4-deoxy-L-arabinose--oxoglutarate aminotransferase"/>
    <property type="match status" value="1"/>
</dbReference>
<dbReference type="FunFam" id="3.90.1150.10:FF:000030">
    <property type="entry name" value="UDP-4-amino-4-deoxy-L-arabinose--oxoglutarate aminotransferase"/>
    <property type="match status" value="1"/>
</dbReference>
<dbReference type="Gene3D" id="3.90.1150.10">
    <property type="entry name" value="Aspartate Aminotransferase, domain 1"/>
    <property type="match status" value="1"/>
</dbReference>
<dbReference type="Gene3D" id="3.40.640.10">
    <property type="entry name" value="Type I PLP-dependent aspartate aminotransferase-like (Major domain)"/>
    <property type="match status" value="1"/>
</dbReference>
<dbReference type="HAMAP" id="MF_01167">
    <property type="entry name" value="ArnB_transfer"/>
    <property type="match status" value="1"/>
</dbReference>
<dbReference type="InterPro" id="IPR022850">
    <property type="entry name" value="ArnB_NH2Trfase"/>
</dbReference>
<dbReference type="InterPro" id="IPR000653">
    <property type="entry name" value="DegT/StrS_aminotransferase"/>
</dbReference>
<dbReference type="InterPro" id="IPR015424">
    <property type="entry name" value="PyrdxlP-dep_Trfase"/>
</dbReference>
<dbReference type="InterPro" id="IPR015421">
    <property type="entry name" value="PyrdxlP-dep_Trfase_major"/>
</dbReference>
<dbReference type="InterPro" id="IPR015422">
    <property type="entry name" value="PyrdxlP-dep_Trfase_small"/>
</dbReference>
<dbReference type="NCBIfam" id="NF008658">
    <property type="entry name" value="PRK11658.1"/>
    <property type="match status" value="1"/>
</dbReference>
<dbReference type="PANTHER" id="PTHR30244:SF34">
    <property type="entry name" value="DTDP-4-AMINO-4,6-DIDEOXYGALACTOSE TRANSAMINASE"/>
    <property type="match status" value="1"/>
</dbReference>
<dbReference type="PANTHER" id="PTHR30244">
    <property type="entry name" value="TRANSAMINASE"/>
    <property type="match status" value="1"/>
</dbReference>
<dbReference type="Pfam" id="PF01041">
    <property type="entry name" value="DegT_DnrJ_EryC1"/>
    <property type="match status" value="1"/>
</dbReference>
<dbReference type="PIRSF" id="PIRSF000390">
    <property type="entry name" value="PLP_StrS"/>
    <property type="match status" value="1"/>
</dbReference>
<dbReference type="SUPFAM" id="SSF53383">
    <property type="entry name" value="PLP-dependent transferases"/>
    <property type="match status" value="1"/>
</dbReference>
<keyword id="KW-0032">Aminotransferase</keyword>
<keyword id="KW-0046">Antibiotic resistance</keyword>
<keyword id="KW-0441">Lipid A biosynthesis</keyword>
<keyword id="KW-0444">Lipid biosynthesis</keyword>
<keyword id="KW-0443">Lipid metabolism</keyword>
<keyword id="KW-0448">Lipopolysaccharide biosynthesis</keyword>
<keyword id="KW-0663">Pyridoxal phosphate</keyword>
<keyword id="KW-0808">Transferase</keyword>
<reference key="1">
    <citation type="journal article" date="2005" name="Proc. Natl. Acad. Sci. U.S.A.">
        <title>Comparison of the complete genome sequences of Pseudomonas syringae pv. syringae B728a and pv. tomato DC3000.</title>
        <authorList>
            <person name="Feil H."/>
            <person name="Feil W.S."/>
            <person name="Chain P."/>
            <person name="Larimer F."/>
            <person name="Dibartolo G."/>
            <person name="Copeland A."/>
            <person name="Lykidis A."/>
            <person name="Trong S."/>
            <person name="Nolan M."/>
            <person name="Goltsman E."/>
            <person name="Thiel J."/>
            <person name="Malfatti S."/>
            <person name="Loper J.E."/>
            <person name="Lapidus A."/>
            <person name="Detter J.C."/>
            <person name="Land M."/>
            <person name="Richardson P.M."/>
            <person name="Kyrpides N.C."/>
            <person name="Ivanova N."/>
            <person name="Lindow S.E."/>
        </authorList>
    </citation>
    <scope>NUCLEOTIDE SEQUENCE [LARGE SCALE GENOMIC DNA]</scope>
    <source>
        <strain>B728a</strain>
    </source>
</reference>
<comment type="function">
    <text evidence="1">Catalyzes the conversion of UDP-4-keto-arabinose (UDP-Ara4O) to UDP-4-amino-4-deoxy-L-arabinose (UDP-L-Ara4N). The modified arabinose is attached to lipid A and is required for resistance to polymyxin and cationic antimicrobial peptides.</text>
</comment>
<comment type="catalytic activity">
    <reaction evidence="1">
        <text>UDP-4-amino-4-deoxy-beta-L-arabinose + 2-oxoglutarate = UDP-beta-L-threo-pentopyranos-4-ulose + L-glutamate</text>
        <dbReference type="Rhea" id="RHEA:24710"/>
        <dbReference type="ChEBI" id="CHEBI:16810"/>
        <dbReference type="ChEBI" id="CHEBI:29985"/>
        <dbReference type="ChEBI" id="CHEBI:58708"/>
        <dbReference type="ChEBI" id="CHEBI:58710"/>
        <dbReference type="EC" id="2.6.1.87"/>
    </reaction>
</comment>
<comment type="cofactor">
    <cofactor evidence="1">
        <name>pyridoxal 5'-phosphate</name>
        <dbReference type="ChEBI" id="CHEBI:597326"/>
    </cofactor>
</comment>
<comment type="pathway">
    <text evidence="1">Nucleotide-sugar biosynthesis; UDP-4-deoxy-4-formamido-beta-L-arabinose biosynthesis; UDP-4-deoxy-4-formamido-beta-L-arabinose from UDP-alpha-D-glucuronate: step 2/3.</text>
</comment>
<comment type="pathway">
    <text evidence="1">Bacterial outer membrane biogenesis; lipopolysaccharide biosynthesis.</text>
</comment>
<comment type="subunit">
    <text evidence="1">Homodimer.</text>
</comment>
<comment type="similarity">
    <text evidence="1">Belongs to the DegT/DnrJ/EryC1 family. ArnB subfamily.</text>
</comment>
<organism>
    <name type="scientific">Pseudomonas syringae pv. syringae (strain B728a)</name>
    <dbReference type="NCBI Taxonomy" id="205918"/>
    <lineage>
        <taxon>Bacteria</taxon>
        <taxon>Pseudomonadati</taxon>
        <taxon>Pseudomonadota</taxon>
        <taxon>Gammaproteobacteria</taxon>
        <taxon>Pseudomonadales</taxon>
        <taxon>Pseudomonadaceae</taxon>
        <taxon>Pseudomonas</taxon>
        <taxon>Pseudomonas syringae</taxon>
    </lineage>
</organism>
<name>ARNB_PSEU2</name>
<gene>
    <name evidence="1" type="primary">arnB</name>
    <name type="ordered locus">Psyr_2689</name>
</gene>
<evidence type="ECO:0000255" key="1">
    <source>
        <dbReference type="HAMAP-Rule" id="MF_01167"/>
    </source>
</evidence>
<protein>
    <recommendedName>
        <fullName evidence="1">UDP-4-amino-4-deoxy-L-arabinose--oxoglutarate aminotransferase</fullName>
        <ecNumber evidence="1">2.6.1.87</ecNumber>
    </recommendedName>
    <alternativeName>
        <fullName>Polymyxin resistance protein PmrH</fullName>
    </alternativeName>
    <alternativeName>
        <fullName evidence="1">UDP-(beta-L-threo-pentapyranosyl-4''-ulose diphosphate) aminotransferase</fullName>
        <shortName evidence="1">UDP-Ara4O aminotransferase</shortName>
    </alternativeName>
    <alternativeName>
        <fullName evidence="1">UDP-4-amino-4-deoxy-L-arabinose aminotransferase</fullName>
    </alternativeName>
</protein>
<accession>Q4ZSZ4</accession>
<feature type="chain" id="PRO_0000110024" description="UDP-4-amino-4-deoxy-L-arabinose--oxoglutarate aminotransferase">
    <location>
        <begin position="1"/>
        <end position="382"/>
    </location>
</feature>
<feature type="modified residue" description="N6-(pyridoxal phosphate)lysine" evidence="1">
    <location>
        <position position="183"/>
    </location>
</feature>
<sequence length="382" mass="41810">MSQTFLAFSRPSIGDEEIAAVTRVLRSGWITTGPECQKLEEEFAARVGARHAVALSSATGAMHVALLALGVGPGDEVITPSQTWVSTANMICLLGATPVFVDVDRDTLMTSAALIEHAITPRTKAIVPVHYAGAAFDLDPLYALADRHGITVIEDAAHAAGTAYQGRPVGQQGTAIFSFHAIKNMTCAEGAMLVTDNARLADRVRQLKFHGLGVDAYDRLTLGRKPQAEVMEPGFKYNLADINASIARVQLQRLDAINAQRQALASHYLERLANSPVLPLALPRYAQQHAWHLFILRIDPERCGLDRDAFMKALQARNIGTGIHFIATHLHSYYRKRFPDVRLPDTEWNSSRLCSIPLFPDMSLDDVERVVGAIESTLESSH</sequence>